<dbReference type="EMBL" id="U19581">
    <property type="protein sequence ID" value="AAA85697.1"/>
    <property type="molecule type" value="Genomic_DNA"/>
</dbReference>
<dbReference type="PIR" id="T09627">
    <property type="entry name" value="T09627"/>
</dbReference>
<dbReference type="RefSeq" id="WP_002893035.1">
    <property type="nucleotide sequence ID" value="NZ_WYAM01000012.1"/>
</dbReference>
<dbReference type="PDB" id="7BEF">
    <property type="method" value="EM"/>
    <property type="resolution" value="4.50 A"/>
    <property type="chains" value="G=1-113"/>
</dbReference>
<dbReference type="PDB" id="7BEG">
    <property type="method" value="EM"/>
    <property type="resolution" value="4.20 A"/>
    <property type="chains" value="G=1-113"/>
</dbReference>
<dbReference type="PDBsum" id="7BEF"/>
<dbReference type="PDBsum" id="7BEG"/>
<dbReference type="EMDB" id="EMD-12156"/>
<dbReference type="EMDB" id="EMD-12157"/>
<dbReference type="SMR" id="Q48413"/>
<dbReference type="OMA" id="SCVAKQV"/>
<dbReference type="PHI-base" id="PHI:7475"/>
<dbReference type="GO" id="GO:0003700">
    <property type="term" value="F:DNA-binding transcription factor activity"/>
    <property type="evidence" value="ECO:0007669"/>
    <property type="project" value="InterPro"/>
</dbReference>
<dbReference type="GO" id="GO:0043565">
    <property type="term" value="F:sequence-specific DNA binding"/>
    <property type="evidence" value="ECO:0007669"/>
    <property type="project" value="InterPro"/>
</dbReference>
<dbReference type="Gene3D" id="1.10.10.60">
    <property type="entry name" value="Homeodomain-like"/>
    <property type="match status" value="2"/>
</dbReference>
<dbReference type="InterPro" id="IPR009057">
    <property type="entry name" value="Homeodomain-like_sf"/>
</dbReference>
<dbReference type="InterPro" id="IPR018060">
    <property type="entry name" value="HTH_AraC"/>
</dbReference>
<dbReference type="InterPro" id="IPR018062">
    <property type="entry name" value="HTH_AraC-typ_CS"/>
</dbReference>
<dbReference type="InterPro" id="IPR050959">
    <property type="entry name" value="MarA-like"/>
</dbReference>
<dbReference type="InterPro" id="IPR020449">
    <property type="entry name" value="Tscrpt_reg_AraC-type_HTH"/>
</dbReference>
<dbReference type="NCBIfam" id="NF012144">
    <property type="entry name" value="ramA_TF"/>
    <property type="match status" value="1"/>
</dbReference>
<dbReference type="PANTHER" id="PTHR47504:SF2">
    <property type="entry name" value="REGULATORY PROTEIN SOXS"/>
    <property type="match status" value="1"/>
</dbReference>
<dbReference type="PANTHER" id="PTHR47504">
    <property type="entry name" value="RIGHT ORIGIN-BINDING PROTEIN"/>
    <property type="match status" value="1"/>
</dbReference>
<dbReference type="Pfam" id="PF12833">
    <property type="entry name" value="HTH_18"/>
    <property type="match status" value="1"/>
</dbReference>
<dbReference type="PRINTS" id="PR00032">
    <property type="entry name" value="HTHARAC"/>
</dbReference>
<dbReference type="SMART" id="SM00342">
    <property type="entry name" value="HTH_ARAC"/>
    <property type="match status" value="1"/>
</dbReference>
<dbReference type="SUPFAM" id="SSF46689">
    <property type="entry name" value="Homeodomain-like"/>
    <property type="match status" value="2"/>
</dbReference>
<dbReference type="PROSITE" id="PS00041">
    <property type="entry name" value="HTH_ARAC_FAMILY_1"/>
    <property type="match status" value="1"/>
</dbReference>
<dbReference type="PROSITE" id="PS01124">
    <property type="entry name" value="HTH_ARAC_FAMILY_2"/>
    <property type="match status" value="1"/>
</dbReference>
<sequence length="113" mass="13495">MTISAQVIDTIVEWIDDNLHQPLRIDDIARHAGYSKWHLQRLFLQYKGESLGRYIRERKLLLAARDLRDTDQRVYDICLKYGFDSQQTFTRVFTRTFNQPPGAYRKENHSRAH</sequence>
<evidence type="ECO:0000255" key="1">
    <source>
        <dbReference type="PROSITE-ProRule" id="PRU00593"/>
    </source>
</evidence>
<gene>
    <name type="primary">ramA</name>
</gene>
<name>RAMA_KLEPN</name>
<feature type="chain" id="PRO_0000194550" description="Transcriptional activator RamA">
    <location>
        <begin position="1"/>
        <end position="113"/>
    </location>
</feature>
<feature type="domain" description="HTH araC/xylS-type" evidence="1">
    <location>
        <begin position="9"/>
        <end position="107"/>
    </location>
</feature>
<feature type="DNA-binding region" description="H-T-H motif" evidence="1">
    <location>
        <begin position="26"/>
        <end position="47"/>
    </location>
</feature>
<feature type="DNA-binding region" description="H-T-H motif" evidence="1">
    <location>
        <begin position="74"/>
        <end position="97"/>
    </location>
</feature>
<keyword id="KW-0002">3D-structure</keyword>
<keyword id="KW-0010">Activator</keyword>
<keyword id="KW-0238">DNA-binding</keyword>
<keyword id="KW-0804">Transcription</keyword>
<keyword id="KW-0805">Transcription regulation</keyword>
<accession>Q48413</accession>
<protein>
    <recommendedName>
        <fullName>Transcriptional activator RamA</fullName>
    </recommendedName>
</protein>
<reference key="1">
    <citation type="journal article" date="1995" name="Microbiology">
        <title>Multidrug resistance in Klebsiella pneumoniae: a novel gene, ramA, confers a multidrug resistance phenotype in Escherichia coli.</title>
        <authorList>
            <person name="George A.M."/>
            <person name="Hall R.M."/>
            <person name="Stokes H.W."/>
        </authorList>
    </citation>
    <scope>NUCLEOTIDE SEQUENCE [GENOMIC DNA]</scope>
    <source>
        <strain>ECL8</strain>
    </source>
</reference>
<organism>
    <name type="scientific">Klebsiella pneumoniae</name>
    <dbReference type="NCBI Taxonomy" id="573"/>
    <lineage>
        <taxon>Bacteria</taxon>
        <taxon>Pseudomonadati</taxon>
        <taxon>Pseudomonadota</taxon>
        <taxon>Gammaproteobacteria</taxon>
        <taxon>Enterobacterales</taxon>
        <taxon>Enterobacteriaceae</taxon>
        <taxon>Klebsiella/Raoultella group</taxon>
        <taxon>Klebsiella</taxon>
        <taxon>Klebsiella pneumoniae complex</taxon>
    </lineage>
</organism>
<comment type="function">
    <text>Probable transcriptional activator. Confers a multidrug resistance phenotype in E.coli.</text>
</comment>
<proteinExistence type="evidence at protein level"/>